<accession>A1T105</accession>
<organism>
    <name type="scientific">Mycolicibacterium vanbaalenii (strain DSM 7251 / JCM 13017 / BCRC 16820 / KCTC 9966 / NRRL B-24157 / PYR-1)</name>
    <name type="common">Mycobacterium vanbaalenii</name>
    <dbReference type="NCBI Taxonomy" id="350058"/>
    <lineage>
        <taxon>Bacteria</taxon>
        <taxon>Bacillati</taxon>
        <taxon>Actinomycetota</taxon>
        <taxon>Actinomycetes</taxon>
        <taxon>Mycobacteriales</taxon>
        <taxon>Mycobacteriaceae</taxon>
        <taxon>Mycolicibacterium</taxon>
    </lineage>
</organism>
<keyword id="KW-0067">ATP-binding</keyword>
<keyword id="KW-0963">Cytoplasm</keyword>
<keyword id="KW-0227">DNA damage</keyword>
<keyword id="KW-0234">DNA repair</keyword>
<keyword id="KW-0235">DNA replication</keyword>
<keyword id="KW-0238">DNA-binding</keyword>
<keyword id="KW-0547">Nucleotide-binding</keyword>
<keyword id="KW-0742">SOS response</keyword>
<comment type="function">
    <text evidence="1">The RecF protein is involved in DNA metabolism; it is required for DNA replication and normal SOS inducibility. RecF binds preferentially to single-stranded, linear DNA. It also seems to bind ATP.</text>
</comment>
<comment type="subcellular location">
    <subcellularLocation>
        <location evidence="1">Cytoplasm</location>
    </subcellularLocation>
</comment>
<comment type="similarity">
    <text evidence="1">Belongs to the RecF family.</text>
</comment>
<sequence length="386" mass="42159">MYVRHLALTDFRSWARVELELEPGRTVFVGSNGFGKTNLIEALWYSATLGSHRVASDAPLIRAGAERAVVSTIVVNDGRELAVDLDITSGRANKARLNRSPVRSAREILGVLRAVLFAPEDLALVRGDPGERRRYLDELATTRRPRIAAVRADYDKVVRQRTALLKTASGARYRGDRGALETLDVWNGHLASHGAQLISARVQLVNELAPEVEKAYQLLAPGSRPAAIRYRSGVDVVEAEAAAGNSDEEMFEAALLDALSRRRDAELERGVCLVGPHRDDLELRLGDQVAKGFASHGESWSMALALRLAAYELLRVEGSDPVLLLDDVFAELDSARRQALAQVAATAEQVLVTAAVEEDIPAEWDARRIGITMQDSDGGRISVVRT</sequence>
<reference key="1">
    <citation type="submission" date="2006-12" db="EMBL/GenBank/DDBJ databases">
        <title>Complete sequence of Mycobacterium vanbaalenii PYR-1.</title>
        <authorList>
            <consortium name="US DOE Joint Genome Institute"/>
            <person name="Copeland A."/>
            <person name="Lucas S."/>
            <person name="Lapidus A."/>
            <person name="Barry K."/>
            <person name="Detter J.C."/>
            <person name="Glavina del Rio T."/>
            <person name="Hammon N."/>
            <person name="Israni S."/>
            <person name="Dalin E."/>
            <person name="Tice H."/>
            <person name="Pitluck S."/>
            <person name="Singan V."/>
            <person name="Schmutz J."/>
            <person name="Larimer F."/>
            <person name="Land M."/>
            <person name="Hauser L."/>
            <person name="Kyrpides N."/>
            <person name="Anderson I.J."/>
            <person name="Miller C."/>
            <person name="Richardson P."/>
        </authorList>
    </citation>
    <scope>NUCLEOTIDE SEQUENCE [LARGE SCALE GENOMIC DNA]</scope>
    <source>
        <strain>DSM 7251 / JCM 13017 / BCRC 16820 / KCTC 9966 / NRRL B-24157 / PYR-1</strain>
    </source>
</reference>
<name>RECF_MYCVP</name>
<protein>
    <recommendedName>
        <fullName evidence="1">DNA replication and repair protein RecF</fullName>
    </recommendedName>
</protein>
<feature type="chain" id="PRO_1000048548" description="DNA replication and repair protein RecF">
    <location>
        <begin position="1"/>
        <end position="386"/>
    </location>
</feature>
<feature type="binding site" evidence="1">
    <location>
        <begin position="30"/>
        <end position="37"/>
    </location>
    <ligand>
        <name>ATP</name>
        <dbReference type="ChEBI" id="CHEBI:30616"/>
    </ligand>
</feature>
<dbReference type="EMBL" id="CP000511">
    <property type="protein sequence ID" value="ABM10855.1"/>
    <property type="molecule type" value="Genomic_DNA"/>
</dbReference>
<dbReference type="RefSeq" id="WP_011777329.1">
    <property type="nucleotide sequence ID" value="NC_008726.1"/>
</dbReference>
<dbReference type="SMR" id="A1T105"/>
<dbReference type="STRING" id="350058.Mvan_0004"/>
<dbReference type="KEGG" id="mva:Mvan_0004"/>
<dbReference type="eggNOG" id="COG1195">
    <property type="taxonomic scope" value="Bacteria"/>
</dbReference>
<dbReference type="HOGENOM" id="CLU_040267_1_1_11"/>
<dbReference type="Proteomes" id="UP000009159">
    <property type="component" value="Chromosome"/>
</dbReference>
<dbReference type="GO" id="GO:0005737">
    <property type="term" value="C:cytoplasm"/>
    <property type="evidence" value="ECO:0007669"/>
    <property type="project" value="UniProtKB-SubCell"/>
</dbReference>
<dbReference type="GO" id="GO:0005524">
    <property type="term" value="F:ATP binding"/>
    <property type="evidence" value="ECO:0007669"/>
    <property type="project" value="UniProtKB-UniRule"/>
</dbReference>
<dbReference type="GO" id="GO:0003697">
    <property type="term" value="F:single-stranded DNA binding"/>
    <property type="evidence" value="ECO:0007669"/>
    <property type="project" value="UniProtKB-UniRule"/>
</dbReference>
<dbReference type="GO" id="GO:0006260">
    <property type="term" value="P:DNA replication"/>
    <property type="evidence" value="ECO:0007669"/>
    <property type="project" value="UniProtKB-UniRule"/>
</dbReference>
<dbReference type="GO" id="GO:0000731">
    <property type="term" value="P:DNA synthesis involved in DNA repair"/>
    <property type="evidence" value="ECO:0007669"/>
    <property type="project" value="TreeGrafter"/>
</dbReference>
<dbReference type="GO" id="GO:0006302">
    <property type="term" value="P:double-strand break repair"/>
    <property type="evidence" value="ECO:0007669"/>
    <property type="project" value="TreeGrafter"/>
</dbReference>
<dbReference type="GO" id="GO:0009432">
    <property type="term" value="P:SOS response"/>
    <property type="evidence" value="ECO:0007669"/>
    <property type="project" value="UniProtKB-UniRule"/>
</dbReference>
<dbReference type="CDD" id="cd03242">
    <property type="entry name" value="ABC_RecF"/>
    <property type="match status" value="1"/>
</dbReference>
<dbReference type="Gene3D" id="3.40.50.300">
    <property type="entry name" value="P-loop containing nucleotide triphosphate hydrolases"/>
    <property type="match status" value="1"/>
</dbReference>
<dbReference type="Gene3D" id="1.20.1050.90">
    <property type="entry name" value="RecF/RecN/SMC, N-terminal domain"/>
    <property type="match status" value="1"/>
</dbReference>
<dbReference type="HAMAP" id="MF_00365">
    <property type="entry name" value="RecF"/>
    <property type="match status" value="1"/>
</dbReference>
<dbReference type="InterPro" id="IPR001238">
    <property type="entry name" value="DNA-binding_RecF"/>
</dbReference>
<dbReference type="InterPro" id="IPR018078">
    <property type="entry name" value="DNA-binding_RecF_CS"/>
</dbReference>
<dbReference type="InterPro" id="IPR027417">
    <property type="entry name" value="P-loop_NTPase"/>
</dbReference>
<dbReference type="InterPro" id="IPR003395">
    <property type="entry name" value="RecF/RecN/SMC_N"/>
</dbReference>
<dbReference type="InterPro" id="IPR042174">
    <property type="entry name" value="RecF_2"/>
</dbReference>
<dbReference type="NCBIfam" id="TIGR00611">
    <property type="entry name" value="recf"/>
    <property type="match status" value="1"/>
</dbReference>
<dbReference type="PANTHER" id="PTHR32182">
    <property type="entry name" value="DNA REPLICATION AND REPAIR PROTEIN RECF"/>
    <property type="match status" value="1"/>
</dbReference>
<dbReference type="PANTHER" id="PTHR32182:SF0">
    <property type="entry name" value="DNA REPLICATION AND REPAIR PROTEIN RECF"/>
    <property type="match status" value="1"/>
</dbReference>
<dbReference type="Pfam" id="PF02463">
    <property type="entry name" value="SMC_N"/>
    <property type="match status" value="1"/>
</dbReference>
<dbReference type="SUPFAM" id="SSF52540">
    <property type="entry name" value="P-loop containing nucleoside triphosphate hydrolases"/>
    <property type="match status" value="1"/>
</dbReference>
<dbReference type="PROSITE" id="PS00617">
    <property type="entry name" value="RECF_1"/>
    <property type="match status" value="1"/>
</dbReference>
<dbReference type="PROSITE" id="PS00618">
    <property type="entry name" value="RECF_2"/>
    <property type="match status" value="1"/>
</dbReference>
<proteinExistence type="inferred from homology"/>
<evidence type="ECO:0000255" key="1">
    <source>
        <dbReference type="HAMAP-Rule" id="MF_00365"/>
    </source>
</evidence>
<gene>
    <name evidence="1" type="primary">recF</name>
    <name type="ordered locus">Mvan_0004</name>
</gene>